<protein>
    <recommendedName>
        <fullName>Transcriptional regulator MraZ</fullName>
    </recommendedName>
</protein>
<proteinExistence type="inferred from homology"/>
<dbReference type="EMBL" id="FM211192">
    <property type="protein sequence ID" value="CAR71000.1"/>
    <property type="molecule type" value="Genomic_DNA"/>
</dbReference>
<dbReference type="SMR" id="B8ZQP1"/>
<dbReference type="KEGG" id="mlb:MLBr00905"/>
<dbReference type="HOGENOM" id="CLU_107907_0_5_11"/>
<dbReference type="Proteomes" id="UP000006900">
    <property type="component" value="Chromosome"/>
</dbReference>
<dbReference type="GO" id="GO:0005737">
    <property type="term" value="C:cytoplasm"/>
    <property type="evidence" value="ECO:0007669"/>
    <property type="project" value="UniProtKB-UniRule"/>
</dbReference>
<dbReference type="GO" id="GO:0009295">
    <property type="term" value="C:nucleoid"/>
    <property type="evidence" value="ECO:0007669"/>
    <property type="project" value="UniProtKB-SubCell"/>
</dbReference>
<dbReference type="GO" id="GO:0003700">
    <property type="term" value="F:DNA-binding transcription factor activity"/>
    <property type="evidence" value="ECO:0007669"/>
    <property type="project" value="UniProtKB-UniRule"/>
</dbReference>
<dbReference type="GO" id="GO:0000976">
    <property type="term" value="F:transcription cis-regulatory region binding"/>
    <property type="evidence" value="ECO:0007669"/>
    <property type="project" value="TreeGrafter"/>
</dbReference>
<dbReference type="GO" id="GO:2000143">
    <property type="term" value="P:negative regulation of DNA-templated transcription initiation"/>
    <property type="evidence" value="ECO:0007669"/>
    <property type="project" value="TreeGrafter"/>
</dbReference>
<dbReference type="CDD" id="cd16321">
    <property type="entry name" value="MraZ_C"/>
    <property type="match status" value="1"/>
</dbReference>
<dbReference type="CDD" id="cd16320">
    <property type="entry name" value="MraZ_N"/>
    <property type="match status" value="1"/>
</dbReference>
<dbReference type="FunFam" id="3.40.1550.20:FF:000004">
    <property type="entry name" value="Transcriptional regulator MraZ"/>
    <property type="match status" value="1"/>
</dbReference>
<dbReference type="Gene3D" id="3.40.1550.20">
    <property type="entry name" value="Transcriptional regulator MraZ domain"/>
    <property type="match status" value="1"/>
</dbReference>
<dbReference type="HAMAP" id="MF_01008">
    <property type="entry name" value="MraZ"/>
    <property type="match status" value="1"/>
</dbReference>
<dbReference type="InterPro" id="IPR003444">
    <property type="entry name" value="MraZ"/>
</dbReference>
<dbReference type="InterPro" id="IPR035644">
    <property type="entry name" value="MraZ_C"/>
</dbReference>
<dbReference type="InterPro" id="IPR020603">
    <property type="entry name" value="MraZ_dom"/>
</dbReference>
<dbReference type="InterPro" id="IPR035642">
    <property type="entry name" value="MraZ_N"/>
</dbReference>
<dbReference type="InterPro" id="IPR038619">
    <property type="entry name" value="MraZ_sf"/>
</dbReference>
<dbReference type="InterPro" id="IPR007159">
    <property type="entry name" value="SpoVT-AbrB_dom"/>
</dbReference>
<dbReference type="InterPro" id="IPR037914">
    <property type="entry name" value="SpoVT-AbrB_sf"/>
</dbReference>
<dbReference type="NCBIfam" id="TIGR00242">
    <property type="entry name" value="division/cell wall cluster transcriptional repressor MraZ"/>
    <property type="match status" value="1"/>
</dbReference>
<dbReference type="PANTHER" id="PTHR34701">
    <property type="entry name" value="TRANSCRIPTIONAL REGULATOR MRAZ"/>
    <property type="match status" value="1"/>
</dbReference>
<dbReference type="PANTHER" id="PTHR34701:SF1">
    <property type="entry name" value="TRANSCRIPTIONAL REGULATOR MRAZ"/>
    <property type="match status" value="1"/>
</dbReference>
<dbReference type="Pfam" id="PF02381">
    <property type="entry name" value="MraZ"/>
    <property type="match status" value="2"/>
</dbReference>
<dbReference type="SUPFAM" id="SSF89447">
    <property type="entry name" value="AbrB/MazE/MraZ-like"/>
    <property type="match status" value="1"/>
</dbReference>
<dbReference type="PROSITE" id="PS51740">
    <property type="entry name" value="SPOVT_ABRB"/>
    <property type="match status" value="2"/>
</dbReference>
<name>MRAZ_MYCLB</name>
<reference key="1">
    <citation type="journal article" date="2009" name="Nat. Genet.">
        <title>Comparative genomic and phylogeographic analysis of Mycobacterium leprae.</title>
        <authorList>
            <person name="Monot M."/>
            <person name="Honore N."/>
            <person name="Garnier T."/>
            <person name="Zidane N."/>
            <person name="Sherafi D."/>
            <person name="Paniz-Mondolfi A."/>
            <person name="Matsuoka M."/>
            <person name="Taylor G.M."/>
            <person name="Donoghue H.D."/>
            <person name="Bouwman A."/>
            <person name="Mays S."/>
            <person name="Watson C."/>
            <person name="Lockwood D."/>
            <person name="Khamispour A."/>
            <person name="Dowlati Y."/>
            <person name="Jianping S."/>
            <person name="Rea T.H."/>
            <person name="Vera-Cabrera L."/>
            <person name="Stefani M.M."/>
            <person name="Banu S."/>
            <person name="Macdonald M."/>
            <person name="Sapkota B.R."/>
            <person name="Spencer J.S."/>
            <person name="Thomas J."/>
            <person name="Harshman K."/>
            <person name="Singh P."/>
            <person name="Busso P."/>
            <person name="Gattiker A."/>
            <person name="Rougemont J."/>
            <person name="Brennan P.J."/>
            <person name="Cole S.T."/>
        </authorList>
    </citation>
    <scope>NUCLEOTIDE SEQUENCE [LARGE SCALE GENOMIC DNA]</scope>
    <source>
        <strain>Br4923</strain>
    </source>
</reference>
<comment type="subunit">
    <text evidence="1">Forms oligomers.</text>
</comment>
<comment type="subcellular location">
    <subcellularLocation>
        <location evidence="1">Cytoplasm</location>
        <location evidence="1">Nucleoid</location>
    </subcellularLocation>
</comment>
<comment type="similarity">
    <text evidence="1">Belongs to the MraZ family.</text>
</comment>
<sequence length="143" mass="16057">MFLGTHTPKLDDKGRLTLPAKFRDALVGGLMVTKSQDHSLAVYPRAEFEQLARRASKMSRSNPEARAFLRNLAAGTDEQHPDMQGRITLSADHRRYANLSKDCVVIGAVDYLEIWDAQAWHDYQQTHEENFSAASDEALGDII</sequence>
<accession>B8ZQP1</accession>
<keyword id="KW-0963">Cytoplasm</keyword>
<keyword id="KW-0238">DNA-binding</keyword>
<keyword id="KW-0677">Repeat</keyword>
<keyword id="KW-0804">Transcription</keyword>
<keyword id="KW-0805">Transcription regulation</keyword>
<organism>
    <name type="scientific">Mycobacterium leprae (strain Br4923)</name>
    <dbReference type="NCBI Taxonomy" id="561304"/>
    <lineage>
        <taxon>Bacteria</taxon>
        <taxon>Bacillati</taxon>
        <taxon>Actinomycetota</taxon>
        <taxon>Actinomycetes</taxon>
        <taxon>Mycobacteriales</taxon>
        <taxon>Mycobacteriaceae</taxon>
        <taxon>Mycobacterium</taxon>
    </lineage>
</organism>
<feature type="chain" id="PRO_1000148864" description="Transcriptional regulator MraZ">
    <location>
        <begin position="1"/>
        <end position="143"/>
    </location>
</feature>
<feature type="domain" description="SpoVT-AbrB 1" evidence="2">
    <location>
        <begin position="5"/>
        <end position="47"/>
    </location>
</feature>
<feature type="domain" description="SpoVT-AbrB 2" evidence="2">
    <location>
        <begin position="76"/>
        <end position="119"/>
    </location>
</feature>
<gene>
    <name evidence="1" type="primary">mraZ</name>
    <name type="ordered locus">MLBr00905</name>
</gene>
<evidence type="ECO:0000255" key="1">
    <source>
        <dbReference type="HAMAP-Rule" id="MF_01008"/>
    </source>
</evidence>
<evidence type="ECO:0000255" key="2">
    <source>
        <dbReference type="PROSITE-ProRule" id="PRU01076"/>
    </source>
</evidence>